<keyword id="KW-1185">Reference proteome</keyword>
<keyword id="KW-0687">Ribonucleoprotein</keyword>
<keyword id="KW-0689">Ribosomal protein</keyword>
<keyword id="KW-0694">RNA-binding</keyword>
<keyword id="KW-0699">rRNA-binding</keyword>
<organism>
    <name type="scientific">Citrobacter koseri (strain ATCC BAA-895 / CDC 4225-83 / SGSC4696)</name>
    <dbReference type="NCBI Taxonomy" id="290338"/>
    <lineage>
        <taxon>Bacteria</taxon>
        <taxon>Pseudomonadati</taxon>
        <taxon>Pseudomonadota</taxon>
        <taxon>Gammaproteobacteria</taxon>
        <taxon>Enterobacterales</taxon>
        <taxon>Enterobacteriaceae</taxon>
        <taxon>Citrobacter</taxon>
    </lineage>
</organism>
<name>RS17_CITK8</name>
<protein>
    <recommendedName>
        <fullName evidence="1">Small ribosomal subunit protein uS17</fullName>
    </recommendedName>
    <alternativeName>
        <fullName evidence="2">30S ribosomal protein S17</fullName>
    </alternativeName>
</protein>
<reference key="1">
    <citation type="submission" date="2007-08" db="EMBL/GenBank/DDBJ databases">
        <authorList>
            <consortium name="The Citrobacter koseri Genome Sequencing Project"/>
            <person name="McClelland M."/>
            <person name="Sanderson E.K."/>
            <person name="Porwollik S."/>
            <person name="Spieth J."/>
            <person name="Clifton W.S."/>
            <person name="Latreille P."/>
            <person name="Courtney L."/>
            <person name="Wang C."/>
            <person name="Pepin K."/>
            <person name="Bhonagiri V."/>
            <person name="Nash W."/>
            <person name="Johnson M."/>
            <person name="Thiruvilangam P."/>
            <person name="Wilson R."/>
        </authorList>
    </citation>
    <scope>NUCLEOTIDE SEQUENCE [LARGE SCALE GENOMIC DNA]</scope>
    <source>
        <strain>ATCC BAA-895 / CDC 4225-83 / SGSC4696</strain>
    </source>
</reference>
<sequence>MTDKIRTLQGRVVSDKMEKSIVVAIERFVKHPIYGKFIKRTTKLHVHDENNECGTGDVVEIRECRPLSKTKSWTLVRVVEKAVL</sequence>
<evidence type="ECO:0000255" key="1">
    <source>
        <dbReference type="HAMAP-Rule" id="MF_01345"/>
    </source>
</evidence>
<evidence type="ECO:0000305" key="2"/>
<dbReference type="EMBL" id="CP000822">
    <property type="protein sequence ID" value="ABV15770.1"/>
    <property type="molecule type" value="Genomic_DNA"/>
</dbReference>
<dbReference type="RefSeq" id="WP_003031120.1">
    <property type="nucleotide sequence ID" value="NC_009792.1"/>
</dbReference>
<dbReference type="SMR" id="A8AQK7"/>
<dbReference type="STRING" id="290338.CKO_04725"/>
<dbReference type="GeneID" id="89546945"/>
<dbReference type="KEGG" id="cko:CKO_04725"/>
<dbReference type="HOGENOM" id="CLU_073626_1_1_6"/>
<dbReference type="OrthoDB" id="9811714at2"/>
<dbReference type="Proteomes" id="UP000008148">
    <property type="component" value="Chromosome"/>
</dbReference>
<dbReference type="GO" id="GO:0022627">
    <property type="term" value="C:cytosolic small ribosomal subunit"/>
    <property type="evidence" value="ECO:0007669"/>
    <property type="project" value="TreeGrafter"/>
</dbReference>
<dbReference type="GO" id="GO:0019843">
    <property type="term" value="F:rRNA binding"/>
    <property type="evidence" value="ECO:0007669"/>
    <property type="project" value="UniProtKB-UniRule"/>
</dbReference>
<dbReference type="GO" id="GO:0003735">
    <property type="term" value="F:structural constituent of ribosome"/>
    <property type="evidence" value="ECO:0007669"/>
    <property type="project" value="InterPro"/>
</dbReference>
<dbReference type="GO" id="GO:0006412">
    <property type="term" value="P:translation"/>
    <property type="evidence" value="ECO:0007669"/>
    <property type="project" value="UniProtKB-UniRule"/>
</dbReference>
<dbReference type="CDD" id="cd00364">
    <property type="entry name" value="Ribosomal_uS17"/>
    <property type="match status" value="1"/>
</dbReference>
<dbReference type="FunFam" id="2.40.50.140:FF:000014">
    <property type="entry name" value="30S ribosomal protein S17"/>
    <property type="match status" value="1"/>
</dbReference>
<dbReference type="Gene3D" id="2.40.50.140">
    <property type="entry name" value="Nucleic acid-binding proteins"/>
    <property type="match status" value="1"/>
</dbReference>
<dbReference type="HAMAP" id="MF_01345_B">
    <property type="entry name" value="Ribosomal_uS17_B"/>
    <property type="match status" value="1"/>
</dbReference>
<dbReference type="InterPro" id="IPR012340">
    <property type="entry name" value="NA-bd_OB-fold"/>
</dbReference>
<dbReference type="InterPro" id="IPR000266">
    <property type="entry name" value="Ribosomal_uS17"/>
</dbReference>
<dbReference type="InterPro" id="IPR019984">
    <property type="entry name" value="Ribosomal_uS17_bact/chlr"/>
</dbReference>
<dbReference type="InterPro" id="IPR019979">
    <property type="entry name" value="Ribosomal_uS17_CS"/>
</dbReference>
<dbReference type="NCBIfam" id="NF004123">
    <property type="entry name" value="PRK05610.1"/>
    <property type="match status" value="1"/>
</dbReference>
<dbReference type="NCBIfam" id="TIGR03635">
    <property type="entry name" value="uS17_bact"/>
    <property type="match status" value="1"/>
</dbReference>
<dbReference type="PANTHER" id="PTHR10744">
    <property type="entry name" value="40S RIBOSOMAL PROTEIN S11 FAMILY MEMBER"/>
    <property type="match status" value="1"/>
</dbReference>
<dbReference type="PANTHER" id="PTHR10744:SF1">
    <property type="entry name" value="SMALL RIBOSOMAL SUBUNIT PROTEIN US17M"/>
    <property type="match status" value="1"/>
</dbReference>
<dbReference type="Pfam" id="PF00366">
    <property type="entry name" value="Ribosomal_S17"/>
    <property type="match status" value="1"/>
</dbReference>
<dbReference type="PRINTS" id="PR00973">
    <property type="entry name" value="RIBOSOMALS17"/>
</dbReference>
<dbReference type="SUPFAM" id="SSF50249">
    <property type="entry name" value="Nucleic acid-binding proteins"/>
    <property type="match status" value="1"/>
</dbReference>
<dbReference type="PROSITE" id="PS00056">
    <property type="entry name" value="RIBOSOMAL_S17"/>
    <property type="match status" value="1"/>
</dbReference>
<feature type="chain" id="PRO_1000054937" description="Small ribosomal subunit protein uS17">
    <location>
        <begin position="1"/>
        <end position="84"/>
    </location>
</feature>
<gene>
    <name evidence="1" type="primary">rpsQ</name>
    <name type="ordered locus">CKO_04725</name>
</gene>
<accession>A8AQK7</accession>
<proteinExistence type="inferred from homology"/>
<comment type="function">
    <text evidence="1">One of the primary rRNA binding proteins, it binds specifically to the 5'-end of 16S ribosomal RNA.</text>
</comment>
<comment type="subunit">
    <text evidence="1">Part of the 30S ribosomal subunit.</text>
</comment>
<comment type="similarity">
    <text evidence="1">Belongs to the universal ribosomal protein uS17 family.</text>
</comment>